<proteinExistence type="predicted"/>
<organism>
    <name type="scientific">Dictyostelium discoideum</name>
    <name type="common">Social amoeba</name>
    <dbReference type="NCBI Taxonomy" id="44689"/>
    <lineage>
        <taxon>Eukaryota</taxon>
        <taxon>Amoebozoa</taxon>
        <taxon>Evosea</taxon>
        <taxon>Eumycetozoa</taxon>
        <taxon>Dictyostelia</taxon>
        <taxon>Dictyosteliales</taxon>
        <taxon>Dictyosteliaceae</taxon>
        <taxon>Dictyostelium</taxon>
    </lineage>
</organism>
<name>Y7146_DICDI</name>
<gene>
    <name type="ORF">DDB_G0286831</name>
</gene>
<evidence type="ECO:0000255" key="1"/>
<evidence type="ECO:0000256" key="2">
    <source>
        <dbReference type="SAM" id="MobiDB-lite"/>
    </source>
</evidence>
<evidence type="ECO:0000305" key="3"/>
<keyword id="KW-0472">Membrane</keyword>
<keyword id="KW-1185">Reference proteome</keyword>
<keyword id="KW-0812">Transmembrane</keyword>
<keyword id="KW-1133">Transmembrane helix</keyword>
<accession>Q54L86</accession>
<reference key="1">
    <citation type="journal article" date="2005" name="Nature">
        <title>The genome of the social amoeba Dictyostelium discoideum.</title>
        <authorList>
            <person name="Eichinger L."/>
            <person name="Pachebat J.A."/>
            <person name="Gloeckner G."/>
            <person name="Rajandream M.A."/>
            <person name="Sucgang R."/>
            <person name="Berriman M."/>
            <person name="Song J."/>
            <person name="Olsen R."/>
            <person name="Szafranski K."/>
            <person name="Xu Q."/>
            <person name="Tunggal B."/>
            <person name="Kummerfeld S."/>
            <person name="Madera M."/>
            <person name="Konfortov B.A."/>
            <person name="Rivero F."/>
            <person name="Bankier A.T."/>
            <person name="Lehmann R."/>
            <person name="Hamlin N."/>
            <person name="Davies R."/>
            <person name="Gaudet P."/>
            <person name="Fey P."/>
            <person name="Pilcher K."/>
            <person name="Chen G."/>
            <person name="Saunders D."/>
            <person name="Sodergren E.J."/>
            <person name="Davis P."/>
            <person name="Kerhornou A."/>
            <person name="Nie X."/>
            <person name="Hall N."/>
            <person name="Anjard C."/>
            <person name="Hemphill L."/>
            <person name="Bason N."/>
            <person name="Farbrother P."/>
            <person name="Desany B."/>
            <person name="Just E."/>
            <person name="Morio T."/>
            <person name="Rost R."/>
            <person name="Churcher C.M."/>
            <person name="Cooper J."/>
            <person name="Haydock S."/>
            <person name="van Driessche N."/>
            <person name="Cronin A."/>
            <person name="Goodhead I."/>
            <person name="Muzny D.M."/>
            <person name="Mourier T."/>
            <person name="Pain A."/>
            <person name="Lu M."/>
            <person name="Harper D."/>
            <person name="Lindsay R."/>
            <person name="Hauser H."/>
            <person name="James K.D."/>
            <person name="Quiles M."/>
            <person name="Madan Babu M."/>
            <person name="Saito T."/>
            <person name="Buchrieser C."/>
            <person name="Wardroper A."/>
            <person name="Felder M."/>
            <person name="Thangavelu M."/>
            <person name="Johnson D."/>
            <person name="Knights A."/>
            <person name="Loulseged H."/>
            <person name="Mungall K.L."/>
            <person name="Oliver K."/>
            <person name="Price C."/>
            <person name="Quail M.A."/>
            <person name="Urushihara H."/>
            <person name="Hernandez J."/>
            <person name="Rabbinowitsch E."/>
            <person name="Steffen D."/>
            <person name="Sanders M."/>
            <person name="Ma J."/>
            <person name="Kohara Y."/>
            <person name="Sharp S."/>
            <person name="Simmonds M.N."/>
            <person name="Spiegler S."/>
            <person name="Tivey A."/>
            <person name="Sugano S."/>
            <person name="White B."/>
            <person name="Walker D."/>
            <person name="Woodward J.R."/>
            <person name="Winckler T."/>
            <person name="Tanaka Y."/>
            <person name="Shaulsky G."/>
            <person name="Schleicher M."/>
            <person name="Weinstock G.M."/>
            <person name="Rosenthal A."/>
            <person name="Cox E.C."/>
            <person name="Chisholm R.L."/>
            <person name="Gibbs R.A."/>
            <person name="Loomis W.F."/>
            <person name="Platzer M."/>
            <person name="Kay R.R."/>
            <person name="Williams J.G."/>
            <person name="Dear P.H."/>
            <person name="Noegel A.A."/>
            <person name="Barrell B.G."/>
            <person name="Kuspa A."/>
        </authorList>
    </citation>
    <scope>NUCLEOTIDE SEQUENCE [LARGE SCALE GENOMIC DNA]</scope>
    <source>
        <strain>AX4</strain>
    </source>
</reference>
<dbReference type="EMBL" id="AAFI02000090">
    <property type="protein sequence ID" value="EAL64013.1"/>
    <property type="molecule type" value="Genomic_DNA"/>
</dbReference>
<dbReference type="RefSeq" id="XP_637517.1">
    <property type="nucleotide sequence ID" value="XM_632425.1"/>
</dbReference>
<dbReference type="PaxDb" id="44689-DDB0187146"/>
<dbReference type="EnsemblProtists" id="EAL64013">
    <property type="protein sequence ID" value="EAL64013"/>
    <property type="gene ID" value="DDB_G0286831"/>
</dbReference>
<dbReference type="GeneID" id="8625815"/>
<dbReference type="KEGG" id="ddi:DDB_G0286831"/>
<dbReference type="dictyBase" id="DDB_G0286831"/>
<dbReference type="VEuPathDB" id="AmoebaDB:DDB_G0286831"/>
<dbReference type="HOGENOM" id="CLU_2214934_0_0_1"/>
<dbReference type="InParanoid" id="Q54L86"/>
<dbReference type="OMA" id="MNFATRS"/>
<dbReference type="PRO" id="PR:Q54L86"/>
<dbReference type="Proteomes" id="UP000002195">
    <property type="component" value="Chromosome 4"/>
</dbReference>
<dbReference type="GO" id="GO:0016020">
    <property type="term" value="C:membrane"/>
    <property type="evidence" value="ECO:0007669"/>
    <property type="project" value="UniProtKB-SubCell"/>
</dbReference>
<protein>
    <recommendedName>
        <fullName>Putative uncharacterized protein DDB_G0286831</fullName>
    </recommendedName>
</protein>
<sequence>MMNFATRSVLRGSIKVNRLYTASASSSSSTRIPSGFASATSSKSNSSTKSSPSPINSFNNKTNNIFKSNATNNSSLAFGIVEFMVFNGMISTITTTTFNNNNNNNNK</sequence>
<comment type="subcellular location">
    <subcellularLocation>
        <location evidence="3">Membrane</location>
        <topology evidence="3">Single-pass membrane protein</topology>
    </subcellularLocation>
</comment>
<feature type="chain" id="PRO_0000347050" description="Putative uncharacterized protein DDB_G0286831">
    <location>
        <begin position="1"/>
        <end position="107"/>
    </location>
</feature>
<feature type="transmembrane region" description="Helical" evidence="1">
    <location>
        <begin position="76"/>
        <end position="98"/>
    </location>
</feature>
<feature type="region of interest" description="Disordered" evidence="2">
    <location>
        <begin position="23"/>
        <end position="64"/>
    </location>
</feature>
<feature type="compositionally biased region" description="Low complexity" evidence="2">
    <location>
        <begin position="37"/>
        <end position="57"/>
    </location>
</feature>